<reference key="1">
    <citation type="journal article" date="2001" name="Nature">
        <title>Complete genome sequence of Salmonella enterica serovar Typhimurium LT2.</title>
        <authorList>
            <person name="McClelland M."/>
            <person name="Sanderson K.E."/>
            <person name="Spieth J."/>
            <person name="Clifton S.W."/>
            <person name="Latreille P."/>
            <person name="Courtney L."/>
            <person name="Porwollik S."/>
            <person name="Ali J."/>
            <person name="Dante M."/>
            <person name="Du F."/>
            <person name="Hou S."/>
            <person name="Layman D."/>
            <person name="Leonard S."/>
            <person name="Nguyen C."/>
            <person name="Scott K."/>
            <person name="Holmes A."/>
            <person name="Grewal N."/>
            <person name="Mulvaney E."/>
            <person name="Ryan E."/>
            <person name="Sun H."/>
            <person name="Florea L."/>
            <person name="Miller W."/>
            <person name="Stoneking T."/>
            <person name="Nhan M."/>
            <person name="Waterston R."/>
            <person name="Wilson R.K."/>
        </authorList>
    </citation>
    <scope>NUCLEOTIDE SEQUENCE [LARGE SCALE GENOMIC DNA]</scope>
    <source>
        <strain>LT2 / SGSC1412 / ATCC 700720</strain>
    </source>
</reference>
<reference key="2">
    <citation type="journal article" date="2001" name="Biochemistry">
        <title>In vitro conversion of propionate to pyruvate by Salmonella enterica enzymes: 2-methylcitrate dehydratase (PrpD) and aconitase enzymes catalyze the conversion of 2-methylcitrate to 2-methylisocitrate.</title>
        <authorList>
            <person name="Horswill A.R."/>
            <person name="Escalante-Semerena J.C."/>
        </authorList>
    </citation>
    <scope>FUNCTION</scope>
    <scope>CATALYTIC ACTIVITY</scope>
    <scope>DISRUPTION PHENOTYPE</scope>
    <source>
        <strain>LT2</strain>
    </source>
</reference>
<reference key="3">
    <citation type="journal article" date="2004" name="Mol. Microbiol.">
        <title>Post-transcriptional regulation of bacterial motility by aconitase proteins.</title>
        <authorList>
            <person name="Tang Y."/>
            <person name="Guest J.R."/>
            <person name="Artymiuk P.J."/>
            <person name="Read R.C."/>
            <person name="Green J."/>
        </authorList>
    </citation>
    <scope>FUNCTION AS RNA-BINDING PROTEIN</scope>
    <scope>DISRUPTION PHENOTYPE</scope>
</reference>
<gene>
    <name type="primary">acnB</name>
    <name type="ordered locus">STM0158</name>
</gene>
<keyword id="KW-0004">4Fe-4S</keyword>
<keyword id="KW-0408">Iron</keyword>
<keyword id="KW-0411">Iron-sulfur</keyword>
<keyword id="KW-0456">Lyase</keyword>
<keyword id="KW-0479">Metal-binding</keyword>
<keyword id="KW-1185">Reference proteome</keyword>
<keyword id="KW-0694">RNA-binding</keyword>
<keyword id="KW-0816">Tricarboxylic acid cycle</keyword>
<name>ACNB_SALTY</name>
<organism>
    <name type="scientific">Salmonella typhimurium (strain LT2 / SGSC1412 / ATCC 700720)</name>
    <dbReference type="NCBI Taxonomy" id="99287"/>
    <lineage>
        <taxon>Bacteria</taxon>
        <taxon>Pseudomonadati</taxon>
        <taxon>Pseudomonadota</taxon>
        <taxon>Gammaproteobacteria</taxon>
        <taxon>Enterobacterales</taxon>
        <taxon>Enterobacteriaceae</taxon>
        <taxon>Salmonella</taxon>
    </lineage>
</organism>
<proteinExistence type="evidence at protein level"/>
<protein>
    <recommendedName>
        <fullName evidence="4">Aconitate hydratase B</fullName>
        <shortName evidence="4">ACN</shortName>
        <shortName evidence="4">Aconitase</shortName>
        <ecNumber evidence="2">4.2.1.3</ecNumber>
    </recommendedName>
    <alternativeName>
        <fullName evidence="7">(2R,3S)-2-methylisocitrate dehydratase</fullName>
    </alternativeName>
    <alternativeName>
        <fullName evidence="7">(2S,3R)-3-hydroxybutane-1,2,3-tricarboxylate dehydratase</fullName>
    </alternativeName>
    <alternativeName>
        <fullName evidence="4">2-methyl-cis-aconitate hydratase</fullName>
        <ecNumber evidence="2">4.2.1.99</ecNumber>
    </alternativeName>
    <alternativeName>
        <fullName evidence="8">Iron-responsive protein-like</fullName>
        <shortName evidence="8">IRP-like</shortName>
    </alternativeName>
    <alternativeName>
        <fullName evidence="5">RNA-binding protein</fullName>
    </alternativeName>
</protein>
<comment type="function">
    <text evidence="2 3">Involved in the catabolism of short chain fatty acids (SCFA) via the tricarboxylic acid (TCA)(acetyl degradation route) and the 2-methylcitrate cycle I (propionate degradation route). Catalyzes the reversible isomerization of citrate to isocitrate via cis-aconitate. Also catalyzes the hydration of 2-methyl-cis-aconitate to yield (2R,3S)-2-methylisocitrate. The apo form of AcnB functions as a RNA-binding regulatory protein which regulates FliC synthesis via interaction with the ftsH transcript to decrease the intracellular levels of FtsH. The lower levels of FtsH protease activity then influence sigma-32, DnaK and ultimately FliC production.</text>
</comment>
<comment type="catalytic activity">
    <reaction evidence="2">
        <text>citrate = D-threo-isocitrate</text>
        <dbReference type="Rhea" id="RHEA:10336"/>
        <dbReference type="ChEBI" id="CHEBI:15562"/>
        <dbReference type="ChEBI" id="CHEBI:16947"/>
        <dbReference type="EC" id="4.2.1.3"/>
    </reaction>
</comment>
<comment type="catalytic activity">
    <reaction evidence="2">
        <text>(2S,3R)-3-hydroxybutane-1,2,3-tricarboxylate = 2-methyl-cis-aconitate + H2O</text>
        <dbReference type="Rhea" id="RHEA:17941"/>
        <dbReference type="ChEBI" id="CHEBI:15377"/>
        <dbReference type="ChEBI" id="CHEBI:57429"/>
        <dbReference type="ChEBI" id="CHEBI:57872"/>
        <dbReference type="EC" id="4.2.1.99"/>
    </reaction>
</comment>
<comment type="cofactor">
    <cofactor evidence="1">
        <name>[4Fe-4S] cluster</name>
        <dbReference type="ChEBI" id="CHEBI:49883"/>
    </cofactor>
    <text evidence="1">Binds 1 [4Fe-4S] cluster per subunit.</text>
</comment>
<comment type="pathway">
    <text evidence="7">Carbohydrate metabolism; tricarboxylic acid cycle; isocitrate from oxaloacetate: step 2/2.</text>
</comment>
<comment type="pathway">
    <text evidence="7">Organic acid metabolism; propanoate degradation.</text>
</comment>
<comment type="subunit">
    <text evidence="1">Monomer.</text>
</comment>
<comment type="disruption phenotype">
    <text evidence="2 3">Cells lacking this gene do not grow on propionate unless glutamate is added, and the addition of glutamate does not restore growth to the level of wild-type. Also unable to grow on acetate and citrate and only slight improvements are observed when glutamate is added. AcnB mutant also shows an impaired binding to the surface of macrophage-like cells, is less motile and possesses fewer flagella due to a level of the flagellum protein FliC lower. The acnAB double mutant does not grow on propionate even when supplemented with glutamate and is unable to respire propionate under anaerobic growth conditions.</text>
</comment>
<comment type="similarity">
    <text evidence="6">Belongs to the aconitase/IPM isomerase family.</text>
</comment>
<sequence>MLEEYRKHVAERAAQGIVPKPLDATQMAALVELLKTPPVGEEEFLLDLLINRVPPGVDEAAYVKAGFLAAVAKGDTTSPLVSPEKAIELLGTMQGGYNIHPLIDALDDAKLAPIAAKALSHTLLMFDNFYDVEEKAKAGNEYAKQVMQSWADAEWFLSRPPLAEKITVTVFKVTGETNTDDLSPAPDAWSRPDIPLHAQAMLKNAREGIEPDQPGVVGPIKQIEALQKKGYPLAYVGDVVGTGSSRKSATNSVLWFMGDDIPNVPNKRGGGLCLGGKIAPIFFNTMEDAGALPIEVDVSNLNMGDVIDVYPYKGEVRNHETGELLATFELKTDVLIDEVRAGGRIPLIIGRGLTTKAREALGLPHSDVFRQAKDVAESSRGFSLAQKMVGRACGVKGIRPGAYCEPKMTSVGSQDTTGPMTRDELKDLACLGFSADLVMQSFCHTAAYPKPVDVTTHHTLPDFIMNRGGVSLRPGDGVIHSWLNRMLLPDTVGTGGDSHTRFPIGISFPAGSGLVAFAAATGVMPLDMPESVLVRFKGKMQPGITLRDLVHAIPLYAIKQGLLTVEKKGKKNIFSGRILEIEGLPDLKVEQAFELTDASAERSAAGCTIKLNKEPIVEYLTSNIVLLKWMIAEGYGDRRTLERRIQGMEKWLADPQLLEADADAEYAAVIDIDLADIKEPILCAPNDPDDARLLSDVQGEKIDEVFIGSCMTNIGHFRAAGKLLDNHKGQLPTRLWVAPPTRMDAAQLTEEGYYSVFGKSGARIEIPGCSLCMGNQARVADGATVVSTSTRNFPNRLGTGANVFLASAELAAVAALIGKLPTPEEYQTYVAQVDKTAVDTYRYLNFDQLSQYTEKADGVIFQTAV</sequence>
<evidence type="ECO:0000250" key="1">
    <source>
        <dbReference type="UniProtKB" id="P36683"/>
    </source>
</evidence>
<evidence type="ECO:0000269" key="2">
    <source>
    </source>
</evidence>
<evidence type="ECO:0000269" key="3">
    <source>
    </source>
</evidence>
<evidence type="ECO:0000303" key="4">
    <source>
    </source>
</evidence>
<evidence type="ECO:0000303" key="5">
    <source>
    </source>
</evidence>
<evidence type="ECO:0000305" key="6"/>
<evidence type="ECO:0000305" key="7">
    <source>
    </source>
</evidence>
<evidence type="ECO:0000305" key="8">
    <source>
    </source>
</evidence>
<dbReference type="EC" id="4.2.1.3" evidence="2"/>
<dbReference type="EC" id="4.2.1.99" evidence="2"/>
<dbReference type="EMBL" id="AE006468">
    <property type="protein sequence ID" value="AAL19122.1"/>
    <property type="molecule type" value="Genomic_DNA"/>
</dbReference>
<dbReference type="RefSeq" id="NP_459163.1">
    <property type="nucleotide sequence ID" value="NC_003197.2"/>
</dbReference>
<dbReference type="RefSeq" id="WP_000888962.1">
    <property type="nucleotide sequence ID" value="NC_003197.2"/>
</dbReference>
<dbReference type="SMR" id="Q8ZRS8"/>
<dbReference type="STRING" id="99287.STM0158"/>
<dbReference type="PaxDb" id="99287-STM0158"/>
<dbReference type="GeneID" id="1251676"/>
<dbReference type="KEGG" id="stm:STM0158"/>
<dbReference type="PATRIC" id="fig|99287.12.peg.168"/>
<dbReference type="HOGENOM" id="CLU_016536_0_0_6"/>
<dbReference type="OMA" id="PLHAKAM"/>
<dbReference type="PhylomeDB" id="Q8ZRS8"/>
<dbReference type="BioCyc" id="MetaCyc:MONOMER-13618"/>
<dbReference type="BioCyc" id="SENT99287:STM0158-MONOMER"/>
<dbReference type="UniPathway" id="UPA00223">
    <property type="reaction ID" value="UER00718"/>
</dbReference>
<dbReference type="UniPathway" id="UPA00946"/>
<dbReference type="Proteomes" id="UP000001014">
    <property type="component" value="Chromosome"/>
</dbReference>
<dbReference type="GO" id="GO:0005829">
    <property type="term" value="C:cytosol"/>
    <property type="evidence" value="ECO:0000318"/>
    <property type="project" value="GO_Central"/>
</dbReference>
<dbReference type="GO" id="GO:0047456">
    <property type="term" value="F:2-methylisocitrate dehydratase activity"/>
    <property type="evidence" value="ECO:0000314"/>
    <property type="project" value="UniProtKB"/>
</dbReference>
<dbReference type="GO" id="GO:0051539">
    <property type="term" value="F:4 iron, 4 sulfur cluster binding"/>
    <property type="evidence" value="ECO:0000250"/>
    <property type="project" value="UniProtKB"/>
</dbReference>
<dbReference type="GO" id="GO:0003994">
    <property type="term" value="F:aconitate hydratase activity"/>
    <property type="evidence" value="ECO:0000314"/>
    <property type="project" value="UniProtKB"/>
</dbReference>
<dbReference type="GO" id="GO:0046872">
    <property type="term" value="F:metal ion binding"/>
    <property type="evidence" value="ECO:0007669"/>
    <property type="project" value="UniProtKB-KW"/>
</dbReference>
<dbReference type="GO" id="GO:0003730">
    <property type="term" value="F:mRNA 3'-UTR binding"/>
    <property type="evidence" value="ECO:0000314"/>
    <property type="project" value="UniProtKB"/>
</dbReference>
<dbReference type="GO" id="GO:0003729">
    <property type="term" value="F:mRNA binding"/>
    <property type="evidence" value="ECO:0000314"/>
    <property type="project" value="UniProtKB"/>
</dbReference>
<dbReference type="GO" id="GO:0019629">
    <property type="term" value="P:propionate catabolic process, 2-methylcitrate cycle"/>
    <property type="evidence" value="ECO:0000315"/>
    <property type="project" value="UniProtKB"/>
</dbReference>
<dbReference type="GO" id="GO:0006099">
    <property type="term" value="P:tricarboxylic acid cycle"/>
    <property type="evidence" value="ECO:0000315"/>
    <property type="project" value="UniProtKB"/>
</dbReference>
<dbReference type="CDD" id="cd01581">
    <property type="entry name" value="AcnB"/>
    <property type="match status" value="1"/>
</dbReference>
<dbReference type="CDD" id="cd01576">
    <property type="entry name" value="AcnB_Swivel"/>
    <property type="match status" value="1"/>
</dbReference>
<dbReference type="FunFam" id="1.25.40.310:FF:000001">
    <property type="entry name" value="Aconitate hydratase B"/>
    <property type="match status" value="1"/>
</dbReference>
<dbReference type="FunFam" id="3.20.19.10:FF:000004">
    <property type="entry name" value="Aconitate hydratase B"/>
    <property type="match status" value="1"/>
</dbReference>
<dbReference type="FunFam" id="3.30.499.10:FF:000001">
    <property type="entry name" value="Aconitate hydratase B"/>
    <property type="match status" value="1"/>
</dbReference>
<dbReference type="FunFam" id="3.30.499.10:FF:000008">
    <property type="entry name" value="Aconitate hydratase B"/>
    <property type="match status" value="1"/>
</dbReference>
<dbReference type="FunFam" id="3.40.1060.10:FF:000002">
    <property type="entry name" value="Aconitate hydratase B"/>
    <property type="match status" value="1"/>
</dbReference>
<dbReference type="Gene3D" id="3.40.1060.10">
    <property type="entry name" value="Aconitase, Domain 2"/>
    <property type="match status" value="1"/>
</dbReference>
<dbReference type="Gene3D" id="3.30.499.10">
    <property type="entry name" value="Aconitase, domain 3"/>
    <property type="match status" value="2"/>
</dbReference>
<dbReference type="Gene3D" id="3.20.19.10">
    <property type="entry name" value="Aconitase, domain 4"/>
    <property type="match status" value="1"/>
</dbReference>
<dbReference type="Gene3D" id="1.25.40.310">
    <property type="entry name" value="Aconitate B, HEAT-like domain"/>
    <property type="match status" value="1"/>
</dbReference>
<dbReference type="InterPro" id="IPR015931">
    <property type="entry name" value="Acnase/IPM_dHydase_lsu_aba_1/3"/>
</dbReference>
<dbReference type="InterPro" id="IPR001030">
    <property type="entry name" value="Acoase/IPM_deHydtase_lsu_aba"/>
</dbReference>
<dbReference type="InterPro" id="IPR015928">
    <property type="entry name" value="Aconitase/3IPM_dehydase_swvl"/>
</dbReference>
<dbReference type="InterPro" id="IPR050926">
    <property type="entry name" value="Aconitase/IPM_isomerase"/>
</dbReference>
<dbReference type="InterPro" id="IPR018136">
    <property type="entry name" value="Aconitase_4Fe-4S_BS"/>
</dbReference>
<dbReference type="InterPro" id="IPR036008">
    <property type="entry name" value="Aconitase_4Fe-4S_dom"/>
</dbReference>
<dbReference type="InterPro" id="IPR004406">
    <property type="entry name" value="Aconitase_B"/>
</dbReference>
<dbReference type="InterPro" id="IPR015933">
    <property type="entry name" value="Aconitase_B_HEAT-like_dom"/>
</dbReference>
<dbReference type="InterPro" id="IPR036288">
    <property type="entry name" value="Aconitase_B_HEAT-like_dom_sf"/>
</dbReference>
<dbReference type="InterPro" id="IPR015929">
    <property type="entry name" value="Aconitase_B_swivel"/>
</dbReference>
<dbReference type="InterPro" id="IPR015932">
    <property type="entry name" value="Aconitase_dom2"/>
</dbReference>
<dbReference type="NCBIfam" id="TIGR00117">
    <property type="entry name" value="acnB"/>
    <property type="match status" value="1"/>
</dbReference>
<dbReference type="NCBIfam" id="NF006690">
    <property type="entry name" value="PRK09238.1"/>
    <property type="match status" value="1"/>
</dbReference>
<dbReference type="PANTHER" id="PTHR43160">
    <property type="entry name" value="ACONITATE HYDRATASE B"/>
    <property type="match status" value="1"/>
</dbReference>
<dbReference type="PANTHER" id="PTHR43160:SF4">
    <property type="entry name" value="ACONITATE HYDRATASE B"/>
    <property type="match status" value="1"/>
</dbReference>
<dbReference type="Pfam" id="PF00330">
    <property type="entry name" value="Aconitase"/>
    <property type="match status" value="1"/>
</dbReference>
<dbReference type="Pfam" id="PF06434">
    <property type="entry name" value="Aconitase_2_N"/>
    <property type="match status" value="1"/>
</dbReference>
<dbReference type="Pfam" id="PF11791">
    <property type="entry name" value="Aconitase_B_N"/>
    <property type="match status" value="1"/>
</dbReference>
<dbReference type="PIRSF" id="PIRSF036687">
    <property type="entry name" value="AcnB"/>
    <property type="match status" value="1"/>
</dbReference>
<dbReference type="SUPFAM" id="SSF74778">
    <property type="entry name" value="Aconitase B, N-terminal domain"/>
    <property type="match status" value="1"/>
</dbReference>
<dbReference type="SUPFAM" id="SSF53732">
    <property type="entry name" value="Aconitase iron-sulfur domain"/>
    <property type="match status" value="1"/>
</dbReference>
<dbReference type="SUPFAM" id="SSF52016">
    <property type="entry name" value="LeuD/IlvD-like"/>
    <property type="match status" value="1"/>
</dbReference>
<dbReference type="PROSITE" id="PS00450">
    <property type="entry name" value="ACONITASE_1"/>
    <property type="match status" value="1"/>
</dbReference>
<dbReference type="PROSITE" id="PS01244">
    <property type="entry name" value="ACONITASE_2"/>
    <property type="match status" value="1"/>
</dbReference>
<feature type="chain" id="PRO_0000432981" description="Aconitate hydratase B">
    <location>
        <begin position="1"/>
        <end position="865"/>
    </location>
</feature>
<feature type="binding site" evidence="1">
    <location>
        <position position="191"/>
    </location>
    <ligand>
        <name>substrate</name>
    </ligand>
</feature>
<feature type="binding site" evidence="1">
    <location>
        <begin position="244"/>
        <end position="246"/>
    </location>
    <ligand>
        <name>substrate</name>
    </ligand>
</feature>
<feature type="binding site" evidence="1">
    <location>
        <begin position="414"/>
        <end position="416"/>
    </location>
    <ligand>
        <name>substrate</name>
    </ligand>
</feature>
<feature type="binding site" evidence="1">
    <location>
        <position position="498"/>
    </location>
    <ligand>
        <name>substrate</name>
    </ligand>
</feature>
<feature type="binding site" evidence="1">
    <location>
        <position position="710"/>
    </location>
    <ligand>
        <name>[4Fe-4S] cluster</name>
        <dbReference type="ChEBI" id="CHEBI:49883"/>
    </ligand>
</feature>
<feature type="binding site" evidence="1">
    <location>
        <position position="769"/>
    </location>
    <ligand>
        <name>[4Fe-4S] cluster</name>
        <dbReference type="ChEBI" id="CHEBI:49883"/>
    </ligand>
</feature>
<feature type="binding site" evidence="1">
    <location>
        <position position="772"/>
    </location>
    <ligand>
        <name>[4Fe-4S] cluster</name>
        <dbReference type="ChEBI" id="CHEBI:49883"/>
    </ligand>
</feature>
<feature type="binding site" evidence="1">
    <location>
        <position position="791"/>
    </location>
    <ligand>
        <name>substrate</name>
    </ligand>
</feature>
<feature type="binding site" evidence="1">
    <location>
        <position position="796"/>
    </location>
    <ligand>
        <name>substrate</name>
    </ligand>
</feature>
<accession>Q8ZRS8</accession>